<protein>
    <recommendedName>
        <fullName>CD226 antigen</fullName>
    </recommendedName>
    <alternativeName>
        <fullName>Platelet and T-cell activation antigen 1</fullName>
    </alternativeName>
    <cdAntigenName>CD226</cdAntigenName>
</protein>
<keyword id="KW-0130">Cell adhesion</keyword>
<keyword id="KW-1003">Cell membrane</keyword>
<keyword id="KW-1015">Disulfide bond</keyword>
<keyword id="KW-0325">Glycoprotein</keyword>
<keyword id="KW-0393">Immunoglobulin domain</keyword>
<keyword id="KW-0472">Membrane</keyword>
<keyword id="KW-0597">Phosphoprotein</keyword>
<keyword id="KW-0675">Receptor</keyword>
<keyword id="KW-1185">Reference proteome</keyword>
<keyword id="KW-0677">Repeat</keyword>
<keyword id="KW-0732">Signal</keyword>
<keyword id="KW-0812">Transmembrane</keyword>
<keyword id="KW-1133">Transmembrane helix</keyword>
<comment type="function">
    <text evidence="2 3">Cell surface receptor that plays an important role in the immune system, particularly in intercellular adhesion, lymphocyte signaling, cytotoxicity and lymphokine secretion mediated by cytotoxic T-cells and NK cells. Functions as a costimulatory receptor upon recognition of target cells, such as virus-infected or tumor cells. Upon binding to its ligands PVR/CD155 or NECTIN2/CD112 on target cells, promotes the cytotoxic activity of NK cells and CTLs, enhancing their ability to kill these cells (By similarity). Mechanistically, phosphorylation by Src kinases such as LYN of FYN, enables binding to adapter GRB2, leading to activation of VAV1, PI3K and PLCG1. Promotes also activation of kinases ERK and AKT, as well as calcium fluxes (By similarity).</text>
</comment>
<comment type="subunit">
    <text evidence="2">Interacts with PVR and NECTIN2. Competes with PVRIG for NECTIN2-binding. Interacts with ITGAL; this interaction mediates CD226 localization to lipid rafts.</text>
</comment>
<comment type="subcellular location">
    <subcellularLocation>
        <location evidence="2">Cell membrane</location>
        <topology evidence="2">Single-pass type I membrane protein</topology>
    </subcellularLocation>
    <text evidence="2">Localizes to lipid rafts.</text>
</comment>
<comment type="PTM">
    <text evidence="1">Phosphorylated.</text>
</comment>
<dbReference type="EMBL" id="AF030432">
    <property type="protein sequence ID" value="AAB84281.1"/>
    <property type="molecule type" value="mRNA"/>
</dbReference>
<dbReference type="RefSeq" id="NP_001036108.1">
    <property type="nucleotide sequence ID" value="NM_001042643.1"/>
</dbReference>
<dbReference type="SMR" id="O18906"/>
<dbReference type="FunCoup" id="O18906">
    <property type="interactions" value="401"/>
</dbReference>
<dbReference type="STRING" id="9544.ENSMMUP00000065314"/>
<dbReference type="GlyCosmos" id="O18906">
    <property type="glycosylation" value="8 sites, No reported glycans"/>
</dbReference>
<dbReference type="PaxDb" id="9544-ENSMMUP00000012105"/>
<dbReference type="GeneID" id="703878"/>
<dbReference type="KEGG" id="mcc:703878"/>
<dbReference type="CTD" id="10666"/>
<dbReference type="eggNOG" id="ENOG502RY5X">
    <property type="taxonomic scope" value="Eukaryota"/>
</dbReference>
<dbReference type="InParanoid" id="O18906"/>
<dbReference type="OrthoDB" id="9937217at2759"/>
<dbReference type="Proteomes" id="UP000006718">
    <property type="component" value="Unassembled WGS sequence"/>
</dbReference>
<dbReference type="GO" id="GO:0009897">
    <property type="term" value="C:external side of plasma membrane"/>
    <property type="evidence" value="ECO:0000318"/>
    <property type="project" value="GO_Central"/>
</dbReference>
<dbReference type="GO" id="GO:0050839">
    <property type="term" value="F:cell adhesion molecule binding"/>
    <property type="evidence" value="ECO:0000318"/>
    <property type="project" value="GO_Central"/>
</dbReference>
<dbReference type="GO" id="GO:0007155">
    <property type="term" value="P:cell adhesion"/>
    <property type="evidence" value="ECO:0007669"/>
    <property type="project" value="UniProtKB-KW"/>
</dbReference>
<dbReference type="GO" id="GO:0060369">
    <property type="term" value="P:positive regulation of Fc receptor mediated stimulatory signaling pathway"/>
    <property type="evidence" value="ECO:0000318"/>
    <property type="project" value="GO_Central"/>
</dbReference>
<dbReference type="GO" id="GO:0002891">
    <property type="term" value="P:positive regulation of immunoglobulin mediated immune response"/>
    <property type="evidence" value="ECO:0000318"/>
    <property type="project" value="GO_Central"/>
</dbReference>
<dbReference type="GO" id="GO:0002729">
    <property type="term" value="P:positive regulation of natural killer cell cytokine production"/>
    <property type="evidence" value="ECO:0007669"/>
    <property type="project" value="InterPro"/>
</dbReference>
<dbReference type="GO" id="GO:0050862">
    <property type="term" value="P:positive regulation of T cell receptor signaling pathway"/>
    <property type="evidence" value="ECO:0000318"/>
    <property type="project" value="GO_Central"/>
</dbReference>
<dbReference type="CDD" id="cd05889">
    <property type="entry name" value="IgV_1_DNAM-1_like"/>
    <property type="match status" value="1"/>
</dbReference>
<dbReference type="FunFam" id="2.60.40.10:FF:001737">
    <property type="entry name" value="CD226 molecule"/>
    <property type="match status" value="1"/>
</dbReference>
<dbReference type="FunFam" id="2.60.40.10:FF:001738">
    <property type="entry name" value="CD226 molecule"/>
    <property type="match status" value="1"/>
</dbReference>
<dbReference type="Gene3D" id="2.60.40.10">
    <property type="entry name" value="Immunoglobulins"/>
    <property type="match status" value="2"/>
</dbReference>
<dbReference type="InterPro" id="IPR042842">
    <property type="entry name" value="CD226"/>
</dbReference>
<dbReference type="InterPro" id="IPR007110">
    <property type="entry name" value="Ig-like_dom"/>
</dbReference>
<dbReference type="InterPro" id="IPR036179">
    <property type="entry name" value="Ig-like_dom_sf"/>
</dbReference>
<dbReference type="InterPro" id="IPR013783">
    <property type="entry name" value="Ig-like_fold"/>
</dbReference>
<dbReference type="InterPro" id="IPR003599">
    <property type="entry name" value="Ig_sub"/>
</dbReference>
<dbReference type="InterPro" id="IPR003598">
    <property type="entry name" value="Ig_sub2"/>
</dbReference>
<dbReference type="InterPro" id="IPR013106">
    <property type="entry name" value="Ig_V-set"/>
</dbReference>
<dbReference type="PANTHER" id="PTHR47011">
    <property type="entry name" value="CD226 ANTIGEN"/>
    <property type="match status" value="1"/>
</dbReference>
<dbReference type="PANTHER" id="PTHR47011:SF1">
    <property type="entry name" value="CD226 ANTIGEN"/>
    <property type="match status" value="1"/>
</dbReference>
<dbReference type="Pfam" id="PF07686">
    <property type="entry name" value="V-set"/>
    <property type="match status" value="2"/>
</dbReference>
<dbReference type="SMART" id="SM00409">
    <property type="entry name" value="IG"/>
    <property type="match status" value="2"/>
</dbReference>
<dbReference type="SMART" id="SM00408">
    <property type="entry name" value="IGc2"/>
    <property type="match status" value="1"/>
</dbReference>
<dbReference type="SUPFAM" id="SSF48726">
    <property type="entry name" value="Immunoglobulin"/>
    <property type="match status" value="2"/>
</dbReference>
<dbReference type="PROSITE" id="PS50835">
    <property type="entry name" value="IG_LIKE"/>
    <property type="match status" value="2"/>
</dbReference>
<evidence type="ECO:0000250" key="1"/>
<evidence type="ECO:0000250" key="2">
    <source>
        <dbReference type="UniProtKB" id="Q15762"/>
    </source>
</evidence>
<evidence type="ECO:0000250" key="3">
    <source>
        <dbReference type="UniProtKB" id="Q8K4F0"/>
    </source>
</evidence>
<evidence type="ECO:0000255" key="4"/>
<evidence type="ECO:0000255" key="5">
    <source>
        <dbReference type="PROSITE-ProRule" id="PRU00114"/>
    </source>
</evidence>
<evidence type="ECO:0000256" key="6">
    <source>
        <dbReference type="SAM" id="MobiDB-lite"/>
    </source>
</evidence>
<sequence>MDYPTLLLALLHVYRALCEEVLWHTSVPFAENMSLECVYPSVGILTQVEWFKIGTEKDSIAIFSPTHGMVIRKPYAERVYFLNSTMASNNMTLFFRNASEDDVGYYSCSLYTYPQGTWQKVIQVVQSDGFEAAVPPNSHIVSEPGKNITLTCQPQMTWPVQEVRWEKIQPHQIDLLTYCDLVHGRNFTSKFPRQIVSNCSHGSWSFIVVPDVTASDSGLYRCHLQASAGENETFVMRLTVAEGQTDNQYTRFVTGGTVLLLLFVISITTIIVIFLNRRRRRERSDLYTESWDTQKAPKNYRSPISASQPTNQSMDDTREDIYVNYPTFSRRPKTRV</sequence>
<feature type="signal peptide" evidence="4">
    <location>
        <begin position="1"/>
        <end position="18"/>
    </location>
</feature>
<feature type="chain" id="PRO_0000014666" description="CD226 antigen">
    <location>
        <begin position="19"/>
        <end position="336"/>
    </location>
</feature>
<feature type="topological domain" description="Extracellular" evidence="4">
    <location>
        <begin position="19"/>
        <end position="254"/>
    </location>
</feature>
<feature type="transmembrane region" description="Helical" evidence="4">
    <location>
        <begin position="255"/>
        <end position="275"/>
    </location>
</feature>
<feature type="topological domain" description="Cytoplasmic" evidence="4">
    <location>
        <begin position="276"/>
        <end position="336"/>
    </location>
</feature>
<feature type="domain" description="Ig-like C2-type 1">
    <location>
        <begin position="19"/>
        <end position="126"/>
    </location>
</feature>
<feature type="domain" description="Ig-like C2-type 2">
    <location>
        <begin position="135"/>
        <end position="239"/>
    </location>
</feature>
<feature type="region of interest" description="Disordered" evidence="6">
    <location>
        <begin position="298"/>
        <end position="319"/>
    </location>
</feature>
<feature type="compositionally biased region" description="Polar residues" evidence="6">
    <location>
        <begin position="302"/>
        <end position="314"/>
    </location>
</feature>
<feature type="modified residue" description="Phosphotyrosine" evidence="2">
    <location>
        <position position="322"/>
    </location>
</feature>
<feature type="glycosylation site" description="N-linked (GlcNAc...) asparagine" evidence="4">
    <location>
        <position position="32"/>
    </location>
</feature>
<feature type="glycosylation site" description="N-linked (GlcNAc...) asparagine" evidence="4">
    <location>
        <position position="83"/>
    </location>
</feature>
<feature type="glycosylation site" description="N-linked (GlcNAc...) asparagine" evidence="2">
    <location>
        <position position="90"/>
    </location>
</feature>
<feature type="glycosylation site" description="N-linked (GlcNAc...) asparagine" evidence="4">
    <location>
        <position position="97"/>
    </location>
</feature>
<feature type="glycosylation site" description="N-linked (GlcNAc...) asparagine" evidence="2">
    <location>
        <position position="147"/>
    </location>
</feature>
<feature type="glycosylation site" description="N-linked (GlcNAc...) asparagine" evidence="2">
    <location>
        <position position="186"/>
    </location>
</feature>
<feature type="glycosylation site" description="N-linked (GlcNAc...) asparagine" evidence="4">
    <location>
        <position position="198"/>
    </location>
</feature>
<feature type="glycosylation site" description="N-linked (GlcNAc...) asparagine" evidence="4">
    <location>
        <position position="231"/>
    </location>
</feature>
<feature type="disulfide bond" evidence="5">
    <location>
        <begin position="37"/>
        <end position="108"/>
    </location>
</feature>
<feature type="disulfide bond" evidence="5">
    <location>
        <begin position="152"/>
        <end position="222"/>
    </location>
</feature>
<feature type="disulfide bond" evidence="2">
    <location>
        <begin position="179"/>
        <end position="199"/>
    </location>
</feature>
<gene>
    <name type="primary">CD226</name>
    <name type="synonym">PTA1</name>
</gene>
<organism>
    <name type="scientific">Macaca mulatta</name>
    <name type="common">Rhesus macaque</name>
    <dbReference type="NCBI Taxonomy" id="9544"/>
    <lineage>
        <taxon>Eukaryota</taxon>
        <taxon>Metazoa</taxon>
        <taxon>Chordata</taxon>
        <taxon>Craniata</taxon>
        <taxon>Vertebrata</taxon>
        <taxon>Euteleostomi</taxon>
        <taxon>Mammalia</taxon>
        <taxon>Eutheria</taxon>
        <taxon>Euarchontoglires</taxon>
        <taxon>Primates</taxon>
        <taxon>Haplorrhini</taxon>
        <taxon>Catarrhini</taxon>
        <taxon>Cercopithecidae</taxon>
        <taxon>Cercopithecinae</taxon>
        <taxon>Macaca</taxon>
    </lineage>
</organism>
<reference key="1">
    <citation type="journal article" date="1999" name="DNA Seq.">
        <title>Isolation of cDNAs encoding gibbon and monkey platelet and T cell activation antigen 1 (PTA1).</title>
        <authorList>
            <person name="Tian F."/>
            <person name="Li D."/>
            <person name="Xia H."/>
            <person name="Liu X."/>
            <person name="Jia W."/>
            <person name="Sun C."/>
            <person name="Sun K."/>
            <person name="Jin B."/>
        </authorList>
    </citation>
    <scope>NUCLEOTIDE SEQUENCE [MRNA]</scope>
</reference>
<accession>O18906</accession>
<proteinExistence type="evidence at transcript level"/>
<name>CD226_MACMU</name>